<proteinExistence type="inferred from homology"/>
<reference key="1">
    <citation type="journal article" date="2002" name="DNA Res.">
        <title>Complete genome structure of the thermophilic cyanobacterium Thermosynechococcus elongatus BP-1.</title>
        <authorList>
            <person name="Nakamura Y."/>
            <person name="Kaneko T."/>
            <person name="Sato S."/>
            <person name="Ikeuchi M."/>
            <person name="Katoh H."/>
            <person name="Sasamoto S."/>
            <person name="Watanabe A."/>
            <person name="Iriguchi M."/>
            <person name="Kawashima K."/>
            <person name="Kimura T."/>
            <person name="Kishida Y."/>
            <person name="Kiyokawa C."/>
            <person name="Kohara M."/>
            <person name="Matsumoto M."/>
            <person name="Matsuno A."/>
            <person name="Nakazaki N."/>
            <person name="Shimpo S."/>
            <person name="Sugimoto M."/>
            <person name="Takeuchi C."/>
            <person name="Yamada M."/>
            <person name="Tabata S."/>
        </authorList>
    </citation>
    <scope>NUCLEOTIDE SEQUENCE [LARGE SCALE GENOMIC DNA]</scope>
    <source>
        <strain>NIES-2133 / IAM M-273 / BP-1</strain>
    </source>
</reference>
<comment type="catalytic activity">
    <reaction evidence="1">
        <text>N-(5-phospho-beta-D-ribosyl)anthranilate = 1-(2-carboxyphenylamino)-1-deoxy-D-ribulose 5-phosphate</text>
        <dbReference type="Rhea" id="RHEA:21540"/>
        <dbReference type="ChEBI" id="CHEBI:18277"/>
        <dbReference type="ChEBI" id="CHEBI:58613"/>
        <dbReference type="EC" id="5.3.1.24"/>
    </reaction>
</comment>
<comment type="pathway">
    <text evidence="1">Amino-acid biosynthesis; L-tryptophan biosynthesis; L-tryptophan from chorismate: step 3/5.</text>
</comment>
<comment type="similarity">
    <text evidence="1">Belongs to the TrpF family.</text>
</comment>
<organism>
    <name type="scientific">Thermosynechococcus vestitus (strain NIES-2133 / IAM M-273 / BP-1)</name>
    <dbReference type="NCBI Taxonomy" id="197221"/>
    <lineage>
        <taxon>Bacteria</taxon>
        <taxon>Bacillati</taxon>
        <taxon>Cyanobacteriota</taxon>
        <taxon>Cyanophyceae</taxon>
        <taxon>Acaryochloridales</taxon>
        <taxon>Thermosynechococcaceae</taxon>
        <taxon>Thermosynechococcus</taxon>
    </lineage>
</organism>
<keyword id="KW-0028">Amino-acid biosynthesis</keyword>
<keyword id="KW-0057">Aromatic amino acid biosynthesis</keyword>
<keyword id="KW-0413">Isomerase</keyword>
<keyword id="KW-1185">Reference proteome</keyword>
<keyword id="KW-0822">Tryptophan biosynthesis</keyword>
<accession>Q8DGP3</accession>
<feature type="chain" id="PRO_0000154388" description="N-(5'-phosphoribosyl)anthranilate isomerase">
    <location>
        <begin position="1"/>
        <end position="230"/>
    </location>
</feature>
<dbReference type="EC" id="5.3.1.24" evidence="1"/>
<dbReference type="EMBL" id="BA000039">
    <property type="protein sequence ID" value="BAC09824.1"/>
    <property type="molecule type" value="Genomic_DNA"/>
</dbReference>
<dbReference type="RefSeq" id="NP_683062.1">
    <property type="nucleotide sequence ID" value="NC_004113.1"/>
</dbReference>
<dbReference type="RefSeq" id="WP_011058105.1">
    <property type="nucleotide sequence ID" value="NC_004113.1"/>
</dbReference>
<dbReference type="SMR" id="Q8DGP3"/>
<dbReference type="STRING" id="197221.gene:10748889"/>
<dbReference type="EnsemblBacteria" id="BAC09824">
    <property type="protein sequence ID" value="BAC09824"/>
    <property type="gene ID" value="BAC09824"/>
</dbReference>
<dbReference type="KEGG" id="tel:tll2272"/>
<dbReference type="PATRIC" id="fig|197221.4.peg.2381"/>
<dbReference type="eggNOG" id="COG0135">
    <property type="taxonomic scope" value="Bacteria"/>
</dbReference>
<dbReference type="UniPathway" id="UPA00035">
    <property type="reaction ID" value="UER00042"/>
</dbReference>
<dbReference type="Proteomes" id="UP000000440">
    <property type="component" value="Chromosome"/>
</dbReference>
<dbReference type="GO" id="GO:0004640">
    <property type="term" value="F:phosphoribosylanthranilate isomerase activity"/>
    <property type="evidence" value="ECO:0007669"/>
    <property type="project" value="UniProtKB-UniRule"/>
</dbReference>
<dbReference type="GO" id="GO:0000162">
    <property type="term" value="P:L-tryptophan biosynthetic process"/>
    <property type="evidence" value="ECO:0007669"/>
    <property type="project" value="UniProtKB-UniRule"/>
</dbReference>
<dbReference type="CDD" id="cd00405">
    <property type="entry name" value="PRAI"/>
    <property type="match status" value="1"/>
</dbReference>
<dbReference type="Gene3D" id="3.20.20.70">
    <property type="entry name" value="Aldolase class I"/>
    <property type="match status" value="1"/>
</dbReference>
<dbReference type="HAMAP" id="MF_00135">
    <property type="entry name" value="PRAI"/>
    <property type="match status" value="1"/>
</dbReference>
<dbReference type="InterPro" id="IPR013785">
    <property type="entry name" value="Aldolase_TIM"/>
</dbReference>
<dbReference type="InterPro" id="IPR001240">
    <property type="entry name" value="PRAI_dom"/>
</dbReference>
<dbReference type="InterPro" id="IPR011060">
    <property type="entry name" value="RibuloseP-bd_barrel"/>
</dbReference>
<dbReference type="InterPro" id="IPR044643">
    <property type="entry name" value="TrpF_fam"/>
</dbReference>
<dbReference type="NCBIfam" id="NF002298">
    <property type="entry name" value="PRK01222.1-4"/>
    <property type="match status" value="1"/>
</dbReference>
<dbReference type="PANTHER" id="PTHR42894">
    <property type="entry name" value="N-(5'-PHOSPHORIBOSYL)ANTHRANILATE ISOMERASE"/>
    <property type="match status" value="1"/>
</dbReference>
<dbReference type="PANTHER" id="PTHR42894:SF1">
    <property type="entry name" value="N-(5'-PHOSPHORIBOSYL)ANTHRANILATE ISOMERASE"/>
    <property type="match status" value="1"/>
</dbReference>
<dbReference type="Pfam" id="PF00697">
    <property type="entry name" value="PRAI"/>
    <property type="match status" value="1"/>
</dbReference>
<dbReference type="SUPFAM" id="SSF51366">
    <property type="entry name" value="Ribulose-phoshate binding barrel"/>
    <property type="match status" value="1"/>
</dbReference>
<sequence>MLNSTIPARIAVKICGLTLPEQAIAIAQMGVSALGFITVPHSPRYVSAPTIAEICRQLPPAVLTVAVVANLDLEALANLVTTTGVQALQLHGSESPEFCQSVRQTFPNIVLIKALRVQSAATLAAIPAYASTVDRILLDAYHPQQLGGTGQPFDWTLLKALHIPCPWWLAGGITPENCRQAIAQTQPQGIDLASGVESRPGVKDLGRVAALLSNLGINANHSLYPEGSRF</sequence>
<gene>
    <name evidence="1" type="primary">trpF</name>
    <name type="ordered locus">tll2272</name>
</gene>
<evidence type="ECO:0000255" key="1">
    <source>
        <dbReference type="HAMAP-Rule" id="MF_00135"/>
    </source>
</evidence>
<protein>
    <recommendedName>
        <fullName evidence="1">N-(5'-phosphoribosyl)anthranilate isomerase</fullName>
        <shortName evidence="1">PRAI</shortName>
        <ecNumber evidence="1">5.3.1.24</ecNumber>
    </recommendedName>
</protein>
<name>TRPF_THEVB</name>